<proteinExistence type="inferred from homology"/>
<accession>B2V7F8</accession>
<keyword id="KW-0963">Cytoplasm</keyword>
<keyword id="KW-0671">Queuosine biosynthesis</keyword>
<keyword id="KW-0949">S-adenosyl-L-methionine</keyword>
<keyword id="KW-0808">Transferase</keyword>
<feature type="chain" id="PRO_1000094823" description="S-adenosylmethionine:tRNA ribosyltransferase-isomerase">
    <location>
        <begin position="1"/>
        <end position="336"/>
    </location>
</feature>
<reference key="1">
    <citation type="journal article" date="2009" name="J. Bacteriol.">
        <title>Complete and draft genome sequences of six members of the Aquificales.</title>
        <authorList>
            <person name="Reysenbach A.-L."/>
            <person name="Hamamura N."/>
            <person name="Podar M."/>
            <person name="Griffiths E."/>
            <person name="Ferreira S."/>
            <person name="Hochstein R."/>
            <person name="Heidelberg J."/>
            <person name="Johnson J."/>
            <person name="Mead D."/>
            <person name="Pohorille A."/>
            <person name="Sarmiento M."/>
            <person name="Schweighofer K."/>
            <person name="Seshadri R."/>
            <person name="Voytek M.A."/>
        </authorList>
    </citation>
    <scope>NUCLEOTIDE SEQUENCE [LARGE SCALE GENOMIC DNA]</scope>
    <source>
        <strain>YO3AOP1</strain>
    </source>
</reference>
<gene>
    <name evidence="1" type="primary">queA</name>
    <name type="ordered locus">SYO3AOP1_0236</name>
</gene>
<name>QUEA_SULSY</name>
<comment type="function">
    <text evidence="1">Transfers and isomerizes the ribose moiety from AdoMet to the 7-aminomethyl group of 7-deazaguanine (preQ1-tRNA) to give epoxyqueuosine (oQ-tRNA).</text>
</comment>
<comment type="catalytic activity">
    <reaction evidence="1">
        <text>7-aminomethyl-7-carbaguanosine(34) in tRNA + S-adenosyl-L-methionine = epoxyqueuosine(34) in tRNA + adenine + L-methionine + 2 H(+)</text>
        <dbReference type="Rhea" id="RHEA:32155"/>
        <dbReference type="Rhea" id="RHEA-COMP:10342"/>
        <dbReference type="Rhea" id="RHEA-COMP:18582"/>
        <dbReference type="ChEBI" id="CHEBI:15378"/>
        <dbReference type="ChEBI" id="CHEBI:16708"/>
        <dbReference type="ChEBI" id="CHEBI:57844"/>
        <dbReference type="ChEBI" id="CHEBI:59789"/>
        <dbReference type="ChEBI" id="CHEBI:82833"/>
        <dbReference type="ChEBI" id="CHEBI:194443"/>
        <dbReference type="EC" id="2.4.99.17"/>
    </reaction>
</comment>
<comment type="pathway">
    <text evidence="1">tRNA modification; tRNA-queuosine biosynthesis.</text>
</comment>
<comment type="subunit">
    <text evidence="1">Monomer.</text>
</comment>
<comment type="subcellular location">
    <subcellularLocation>
        <location evidence="1">Cytoplasm</location>
    </subcellularLocation>
</comment>
<comment type="similarity">
    <text evidence="1">Belongs to the QueA family.</text>
</comment>
<protein>
    <recommendedName>
        <fullName evidence="1">S-adenosylmethionine:tRNA ribosyltransferase-isomerase</fullName>
        <ecNumber evidence="1">2.4.99.17</ecNumber>
    </recommendedName>
    <alternativeName>
        <fullName evidence="1">Queuosine biosynthesis protein QueA</fullName>
    </alternativeName>
</protein>
<organism>
    <name type="scientific">Sulfurihydrogenibium sp. (strain YO3AOP1)</name>
    <dbReference type="NCBI Taxonomy" id="436114"/>
    <lineage>
        <taxon>Bacteria</taxon>
        <taxon>Pseudomonadati</taxon>
        <taxon>Aquificota</taxon>
        <taxon>Aquificia</taxon>
        <taxon>Aquificales</taxon>
        <taxon>Hydrogenothermaceae</taxon>
        <taxon>Sulfurihydrogenibium</taxon>
    </lineage>
</organism>
<dbReference type="EC" id="2.4.99.17" evidence="1"/>
<dbReference type="EMBL" id="CP001080">
    <property type="protein sequence ID" value="ACD65881.1"/>
    <property type="molecule type" value="Genomic_DNA"/>
</dbReference>
<dbReference type="RefSeq" id="WP_012458970.1">
    <property type="nucleotide sequence ID" value="NC_010730.1"/>
</dbReference>
<dbReference type="SMR" id="B2V7F8"/>
<dbReference type="STRING" id="436114.SYO3AOP1_0236"/>
<dbReference type="KEGG" id="sul:SYO3AOP1_0236"/>
<dbReference type="eggNOG" id="COG0809">
    <property type="taxonomic scope" value="Bacteria"/>
</dbReference>
<dbReference type="HOGENOM" id="CLU_039110_1_0_0"/>
<dbReference type="UniPathway" id="UPA00392"/>
<dbReference type="GO" id="GO:0005737">
    <property type="term" value="C:cytoplasm"/>
    <property type="evidence" value="ECO:0007669"/>
    <property type="project" value="UniProtKB-SubCell"/>
</dbReference>
<dbReference type="GO" id="GO:0051075">
    <property type="term" value="F:S-adenosylmethionine:tRNA ribosyltransferase-isomerase activity"/>
    <property type="evidence" value="ECO:0007669"/>
    <property type="project" value="UniProtKB-EC"/>
</dbReference>
<dbReference type="GO" id="GO:0008616">
    <property type="term" value="P:queuosine biosynthetic process"/>
    <property type="evidence" value="ECO:0007669"/>
    <property type="project" value="UniProtKB-UniRule"/>
</dbReference>
<dbReference type="GO" id="GO:0002099">
    <property type="term" value="P:tRNA wobble guanine modification"/>
    <property type="evidence" value="ECO:0007669"/>
    <property type="project" value="TreeGrafter"/>
</dbReference>
<dbReference type="FunFam" id="2.40.10.240:FF:000002">
    <property type="entry name" value="S-adenosylmethionine:tRNA ribosyltransferase-isomerase"/>
    <property type="match status" value="1"/>
</dbReference>
<dbReference type="FunFam" id="3.40.1780.10:FF:000001">
    <property type="entry name" value="S-adenosylmethionine:tRNA ribosyltransferase-isomerase"/>
    <property type="match status" value="1"/>
</dbReference>
<dbReference type="Gene3D" id="2.40.10.240">
    <property type="entry name" value="QueA-like"/>
    <property type="match status" value="1"/>
</dbReference>
<dbReference type="Gene3D" id="3.40.1780.10">
    <property type="entry name" value="QueA-like"/>
    <property type="match status" value="1"/>
</dbReference>
<dbReference type="HAMAP" id="MF_00113">
    <property type="entry name" value="QueA"/>
    <property type="match status" value="1"/>
</dbReference>
<dbReference type="InterPro" id="IPR003699">
    <property type="entry name" value="QueA"/>
</dbReference>
<dbReference type="InterPro" id="IPR042118">
    <property type="entry name" value="QueA_dom1"/>
</dbReference>
<dbReference type="InterPro" id="IPR042119">
    <property type="entry name" value="QueA_dom2"/>
</dbReference>
<dbReference type="InterPro" id="IPR036100">
    <property type="entry name" value="QueA_sf"/>
</dbReference>
<dbReference type="NCBIfam" id="NF001140">
    <property type="entry name" value="PRK00147.1"/>
    <property type="match status" value="1"/>
</dbReference>
<dbReference type="NCBIfam" id="TIGR00113">
    <property type="entry name" value="queA"/>
    <property type="match status" value="1"/>
</dbReference>
<dbReference type="PANTHER" id="PTHR30307">
    <property type="entry name" value="S-ADENOSYLMETHIONINE:TRNA RIBOSYLTRANSFERASE-ISOMERASE"/>
    <property type="match status" value="1"/>
</dbReference>
<dbReference type="PANTHER" id="PTHR30307:SF0">
    <property type="entry name" value="S-ADENOSYLMETHIONINE:TRNA RIBOSYLTRANSFERASE-ISOMERASE"/>
    <property type="match status" value="1"/>
</dbReference>
<dbReference type="Pfam" id="PF02547">
    <property type="entry name" value="Queuosine_synth"/>
    <property type="match status" value="1"/>
</dbReference>
<dbReference type="SUPFAM" id="SSF111337">
    <property type="entry name" value="QueA-like"/>
    <property type="match status" value="1"/>
</dbReference>
<evidence type="ECO:0000255" key="1">
    <source>
        <dbReference type="HAMAP-Rule" id="MF_00113"/>
    </source>
</evidence>
<sequence length="336" mass="39049">MKLSDFDYHLPKELIAKYPAQPRDSCRLMVLNRKDKTIEHRIFRDVIDYLKPGDTLVLNNTKVIPARLIGKKEKTNANIEVFLLRPIEDNIWETLIKNVRRLKKNQKIIISDDFYVEFLSKDDEKAIVKIHSKDIKSDLEKYGHVPLPPYIEREDEEKDKDYYQTVFADKEGSVASPTAGLHFTKELLEKIKEKGVNIAYITLHVGLGTFKPVKTEDITKHKMHEEYFTIPKETLEMIKKTKENKKSLVAVGTTVVRALETYGKFGKTEGFTDIFIYPPYEFKIVDKLITNFHLPKSTLLMLVSAFADRDFILRAYNGAVKEKYRFFSYGDAMLIV</sequence>